<accession>B4TUQ7</accession>
<keyword id="KW-0963">Cytoplasm</keyword>
<keyword id="KW-0413">Isomerase</keyword>
<keyword id="KW-0414">Isoprene biosynthesis</keyword>
<keyword id="KW-0460">Magnesium</keyword>
<keyword id="KW-0464">Manganese</keyword>
<keyword id="KW-0479">Metal-binding</keyword>
<comment type="function">
    <text evidence="1">Catalyzes the 1,3-allylic rearrangement of the homoallylic substrate isopentenyl (IPP) to its highly electrophilic allylic isomer, dimethylallyl diphosphate (DMAPP).</text>
</comment>
<comment type="catalytic activity">
    <reaction evidence="1">
        <text>isopentenyl diphosphate = dimethylallyl diphosphate</text>
        <dbReference type="Rhea" id="RHEA:23284"/>
        <dbReference type="ChEBI" id="CHEBI:57623"/>
        <dbReference type="ChEBI" id="CHEBI:128769"/>
        <dbReference type="EC" id="5.3.3.2"/>
    </reaction>
</comment>
<comment type="cofactor">
    <cofactor evidence="1">
        <name>Mg(2+)</name>
        <dbReference type="ChEBI" id="CHEBI:18420"/>
    </cofactor>
    <text evidence="1">Binds 1 Mg(2+) ion per subunit. The magnesium ion binds only when substrate is bound.</text>
</comment>
<comment type="cofactor">
    <cofactor evidence="1">
        <name>Mn(2+)</name>
        <dbReference type="ChEBI" id="CHEBI:29035"/>
    </cofactor>
    <text evidence="1">Binds 1 Mn(2+) ion per subunit.</text>
</comment>
<comment type="pathway">
    <text evidence="1">Isoprenoid biosynthesis; dimethylallyl diphosphate biosynthesis; dimethylallyl diphosphate from isopentenyl diphosphate: step 1/1.</text>
</comment>
<comment type="subunit">
    <text evidence="1">Homodimer.</text>
</comment>
<comment type="subcellular location">
    <subcellularLocation>
        <location evidence="1">Cytoplasm</location>
    </subcellularLocation>
</comment>
<comment type="similarity">
    <text evidence="1">Belongs to the IPP isomerase type 1 family.</text>
</comment>
<organism>
    <name type="scientific">Salmonella schwarzengrund (strain CVM19633)</name>
    <dbReference type="NCBI Taxonomy" id="439843"/>
    <lineage>
        <taxon>Bacteria</taxon>
        <taxon>Pseudomonadati</taxon>
        <taxon>Pseudomonadota</taxon>
        <taxon>Gammaproteobacteria</taxon>
        <taxon>Enterobacterales</taxon>
        <taxon>Enterobacteriaceae</taxon>
        <taxon>Salmonella</taxon>
    </lineage>
</organism>
<gene>
    <name evidence="1" type="primary">idi</name>
    <name type="ordered locus">SeSA_A3207</name>
</gene>
<sequence length="181" mass="20781">MTEEHVVLLDEQDKPSGTLEKYAAHTLNTPLHLAFSCWLFNEDGQLLVTRRSLSKKAWPGVWTNSVCGHPQQGETTEEAIIRRCRFELGVEITDLTPVYPHFSYRATDPNGIVENEVCPVFAARATSVLQVNSEEVMDYQWSEFKSVWKSLLATPWAFSPWMVMQASDEQARERLLNYCQR</sequence>
<name>IDI_SALSV</name>
<reference key="1">
    <citation type="journal article" date="2011" name="J. Bacteriol.">
        <title>Comparative genomics of 28 Salmonella enterica isolates: evidence for CRISPR-mediated adaptive sublineage evolution.</title>
        <authorList>
            <person name="Fricke W.F."/>
            <person name="Mammel M.K."/>
            <person name="McDermott P.F."/>
            <person name="Tartera C."/>
            <person name="White D.G."/>
            <person name="Leclerc J.E."/>
            <person name="Ravel J."/>
            <person name="Cebula T.A."/>
        </authorList>
    </citation>
    <scope>NUCLEOTIDE SEQUENCE [LARGE SCALE GENOMIC DNA]</scope>
    <source>
        <strain>CVM19633</strain>
    </source>
</reference>
<evidence type="ECO:0000255" key="1">
    <source>
        <dbReference type="HAMAP-Rule" id="MF_00202"/>
    </source>
</evidence>
<protein>
    <recommendedName>
        <fullName evidence="1">Isopentenyl-diphosphate Delta-isomerase</fullName>
        <shortName evidence="1">IPP isomerase</shortName>
        <ecNumber evidence="1">5.3.3.2</ecNumber>
    </recommendedName>
    <alternativeName>
        <fullName evidence="1">IPP:DMAPP isomerase</fullName>
    </alternativeName>
    <alternativeName>
        <fullName evidence="1">Isopentenyl pyrophosphate isomerase</fullName>
    </alternativeName>
</protein>
<proteinExistence type="inferred from homology"/>
<dbReference type="EC" id="5.3.3.2" evidence="1"/>
<dbReference type="EMBL" id="CP001127">
    <property type="protein sequence ID" value="ACF92910.1"/>
    <property type="molecule type" value="Genomic_DNA"/>
</dbReference>
<dbReference type="RefSeq" id="WP_000133994.1">
    <property type="nucleotide sequence ID" value="NC_011094.1"/>
</dbReference>
<dbReference type="SMR" id="B4TUQ7"/>
<dbReference type="KEGG" id="sew:SeSA_A3207"/>
<dbReference type="HOGENOM" id="CLU_060552_2_0_6"/>
<dbReference type="UniPathway" id="UPA00059">
    <property type="reaction ID" value="UER00104"/>
</dbReference>
<dbReference type="Proteomes" id="UP000001865">
    <property type="component" value="Chromosome"/>
</dbReference>
<dbReference type="GO" id="GO:0005737">
    <property type="term" value="C:cytoplasm"/>
    <property type="evidence" value="ECO:0007669"/>
    <property type="project" value="UniProtKB-SubCell"/>
</dbReference>
<dbReference type="GO" id="GO:0004452">
    <property type="term" value="F:isopentenyl-diphosphate delta-isomerase activity"/>
    <property type="evidence" value="ECO:0007669"/>
    <property type="project" value="UniProtKB-UniRule"/>
</dbReference>
<dbReference type="GO" id="GO:0046872">
    <property type="term" value="F:metal ion binding"/>
    <property type="evidence" value="ECO:0007669"/>
    <property type="project" value="UniProtKB-KW"/>
</dbReference>
<dbReference type="GO" id="GO:0050992">
    <property type="term" value="P:dimethylallyl diphosphate biosynthetic process"/>
    <property type="evidence" value="ECO:0007669"/>
    <property type="project" value="UniProtKB-UniRule"/>
</dbReference>
<dbReference type="GO" id="GO:0008299">
    <property type="term" value="P:isoprenoid biosynthetic process"/>
    <property type="evidence" value="ECO:0007669"/>
    <property type="project" value="UniProtKB-KW"/>
</dbReference>
<dbReference type="CDD" id="cd02885">
    <property type="entry name" value="NUDIX_IPP_Isomerase"/>
    <property type="match status" value="1"/>
</dbReference>
<dbReference type="FunFam" id="3.90.79.10:FF:000009">
    <property type="entry name" value="Isopentenyl-diphosphate Delta-isomerase"/>
    <property type="match status" value="1"/>
</dbReference>
<dbReference type="Gene3D" id="3.90.79.10">
    <property type="entry name" value="Nucleoside Triphosphate Pyrophosphohydrolase"/>
    <property type="match status" value="1"/>
</dbReference>
<dbReference type="HAMAP" id="MF_00202">
    <property type="entry name" value="Idi"/>
    <property type="match status" value="1"/>
</dbReference>
<dbReference type="InterPro" id="IPR056375">
    <property type="entry name" value="Idi_bact"/>
</dbReference>
<dbReference type="InterPro" id="IPR011876">
    <property type="entry name" value="IsopentenylPP_isomerase_typ1"/>
</dbReference>
<dbReference type="InterPro" id="IPR015797">
    <property type="entry name" value="NUDIX_hydrolase-like_dom_sf"/>
</dbReference>
<dbReference type="InterPro" id="IPR000086">
    <property type="entry name" value="NUDIX_hydrolase_dom"/>
</dbReference>
<dbReference type="NCBIfam" id="TIGR02150">
    <property type="entry name" value="IPP_isom_1"/>
    <property type="match status" value="1"/>
</dbReference>
<dbReference type="NCBIfam" id="NF002995">
    <property type="entry name" value="PRK03759.1"/>
    <property type="match status" value="1"/>
</dbReference>
<dbReference type="PANTHER" id="PTHR10885">
    <property type="entry name" value="ISOPENTENYL-DIPHOSPHATE DELTA-ISOMERASE"/>
    <property type="match status" value="1"/>
</dbReference>
<dbReference type="PANTHER" id="PTHR10885:SF0">
    <property type="entry name" value="ISOPENTENYL-DIPHOSPHATE DELTA-ISOMERASE"/>
    <property type="match status" value="1"/>
</dbReference>
<dbReference type="Pfam" id="PF00293">
    <property type="entry name" value="NUDIX"/>
    <property type="match status" value="1"/>
</dbReference>
<dbReference type="PIRSF" id="PIRSF018427">
    <property type="entry name" value="Isopntndiph_ism"/>
    <property type="match status" value="1"/>
</dbReference>
<dbReference type="SUPFAM" id="SSF55811">
    <property type="entry name" value="Nudix"/>
    <property type="match status" value="1"/>
</dbReference>
<dbReference type="PROSITE" id="PS51462">
    <property type="entry name" value="NUDIX"/>
    <property type="match status" value="1"/>
</dbReference>
<feature type="chain" id="PRO_1000099447" description="Isopentenyl-diphosphate Delta-isomerase">
    <location>
        <begin position="1"/>
        <end position="181"/>
    </location>
</feature>
<feature type="domain" description="Nudix hydrolase">
    <location>
        <begin position="30"/>
        <end position="164"/>
    </location>
</feature>
<feature type="active site" evidence="1">
    <location>
        <position position="67"/>
    </location>
</feature>
<feature type="active site" evidence="1">
    <location>
        <position position="116"/>
    </location>
</feature>
<feature type="binding site" evidence="1">
    <location>
        <position position="25"/>
    </location>
    <ligand>
        <name>Mn(2+)</name>
        <dbReference type="ChEBI" id="CHEBI:29035"/>
    </ligand>
</feature>
<feature type="binding site" evidence="1">
    <location>
        <position position="32"/>
    </location>
    <ligand>
        <name>Mn(2+)</name>
        <dbReference type="ChEBI" id="CHEBI:29035"/>
    </ligand>
</feature>
<feature type="binding site" evidence="1">
    <location>
        <position position="69"/>
    </location>
    <ligand>
        <name>Mn(2+)</name>
        <dbReference type="ChEBI" id="CHEBI:29035"/>
    </ligand>
</feature>
<feature type="binding site" evidence="1">
    <location>
        <position position="87"/>
    </location>
    <ligand>
        <name>Mg(2+)</name>
        <dbReference type="ChEBI" id="CHEBI:18420"/>
    </ligand>
</feature>
<feature type="binding site" evidence="1">
    <location>
        <position position="114"/>
    </location>
    <ligand>
        <name>Mn(2+)</name>
        <dbReference type="ChEBI" id="CHEBI:29035"/>
    </ligand>
</feature>
<feature type="binding site" evidence="1">
    <location>
        <position position="116"/>
    </location>
    <ligand>
        <name>Mn(2+)</name>
        <dbReference type="ChEBI" id="CHEBI:29035"/>
    </ligand>
</feature>